<comment type="similarity">
    <text evidence="1">Belongs to the UPF0301 (AlgH) family.</text>
</comment>
<comment type="sequence caution" evidence="2">
    <conflict type="erroneous initiation">
        <sequence resource="EMBL-CDS" id="ABF09616"/>
    </conflict>
</comment>
<protein>
    <recommendedName>
        <fullName evidence="1">UPF0301 protein Rmet_2743</fullName>
    </recommendedName>
</protein>
<keyword id="KW-1185">Reference proteome</keyword>
<sequence>MATSEAPINLTNQFLIAMPGMADPTFSGSVVYLCEHNERGALGLVINRPIDIDMATLFDKIDLKLEIQPVAHQPVYFGGPVQTERGFVLHDPVGIYVSSLAVPGGLEMTTSKDVLEAVANGSGPHRFLLTLGYAGWGAGQLEDELSRNGWLTVQADPEIIFSVPPEERFAAAIRLLGIDISMLSGDAGHA</sequence>
<evidence type="ECO:0000255" key="1">
    <source>
        <dbReference type="HAMAP-Rule" id="MF_00758"/>
    </source>
</evidence>
<evidence type="ECO:0000305" key="2"/>
<accession>Q1LJR0</accession>
<proteinExistence type="inferred from homology"/>
<name>Y2743_CUPMC</name>
<dbReference type="EMBL" id="CP000352">
    <property type="protein sequence ID" value="ABF09616.1"/>
    <property type="status" value="ALT_INIT"/>
    <property type="molecule type" value="Genomic_DNA"/>
</dbReference>
<dbReference type="RefSeq" id="WP_008646285.1">
    <property type="nucleotide sequence ID" value="NC_007973.1"/>
</dbReference>
<dbReference type="SMR" id="Q1LJR0"/>
<dbReference type="STRING" id="266264.Rmet_2743"/>
<dbReference type="KEGG" id="rme:Rmet_2743"/>
<dbReference type="eggNOG" id="COG1678">
    <property type="taxonomic scope" value="Bacteria"/>
</dbReference>
<dbReference type="HOGENOM" id="CLU_057596_1_0_4"/>
<dbReference type="Proteomes" id="UP000002429">
    <property type="component" value="Chromosome"/>
</dbReference>
<dbReference type="GO" id="GO:0005829">
    <property type="term" value="C:cytosol"/>
    <property type="evidence" value="ECO:0007669"/>
    <property type="project" value="TreeGrafter"/>
</dbReference>
<dbReference type="Gene3D" id="3.40.1740.10">
    <property type="entry name" value="VC0467-like"/>
    <property type="match status" value="1"/>
</dbReference>
<dbReference type="HAMAP" id="MF_00758">
    <property type="entry name" value="UPF0301"/>
    <property type="match status" value="1"/>
</dbReference>
<dbReference type="InterPro" id="IPR003774">
    <property type="entry name" value="AlgH-like"/>
</dbReference>
<dbReference type="NCBIfam" id="NF001266">
    <property type="entry name" value="PRK00228.1-1"/>
    <property type="match status" value="1"/>
</dbReference>
<dbReference type="NCBIfam" id="NF001267">
    <property type="entry name" value="PRK00228.1-2"/>
    <property type="match status" value="1"/>
</dbReference>
<dbReference type="PANTHER" id="PTHR30327">
    <property type="entry name" value="UNCHARACTERIZED PROTEIN YQGE"/>
    <property type="match status" value="1"/>
</dbReference>
<dbReference type="PANTHER" id="PTHR30327:SF1">
    <property type="entry name" value="UPF0301 PROTEIN YQGE"/>
    <property type="match status" value="1"/>
</dbReference>
<dbReference type="Pfam" id="PF02622">
    <property type="entry name" value="DUF179"/>
    <property type="match status" value="1"/>
</dbReference>
<dbReference type="SUPFAM" id="SSF143456">
    <property type="entry name" value="VC0467-like"/>
    <property type="match status" value="1"/>
</dbReference>
<organism>
    <name type="scientific">Cupriavidus metallidurans (strain ATCC 43123 / DSM 2839 / NBRC 102507 / CH34)</name>
    <name type="common">Ralstonia metallidurans</name>
    <dbReference type="NCBI Taxonomy" id="266264"/>
    <lineage>
        <taxon>Bacteria</taxon>
        <taxon>Pseudomonadati</taxon>
        <taxon>Pseudomonadota</taxon>
        <taxon>Betaproteobacteria</taxon>
        <taxon>Burkholderiales</taxon>
        <taxon>Burkholderiaceae</taxon>
        <taxon>Cupriavidus</taxon>
    </lineage>
</organism>
<gene>
    <name type="ordered locus">Rmet_2743</name>
</gene>
<feature type="chain" id="PRO_0000258863" description="UPF0301 protein Rmet_2743">
    <location>
        <begin position="1"/>
        <end position="190"/>
    </location>
</feature>
<reference key="1">
    <citation type="journal article" date="2010" name="PLoS ONE">
        <title>The complete genome sequence of Cupriavidus metallidurans strain CH34, a master survivalist in harsh and anthropogenic environments.</title>
        <authorList>
            <person name="Janssen P.J."/>
            <person name="Van Houdt R."/>
            <person name="Moors H."/>
            <person name="Monsieurs P."/>
            <person name="Morin N."/>
            <person name="Michaux A."/>
            <person name="Benotmane M.A."/>
            <person name="Leys N."/>
            <person name="Vallaeys T."/>
            <person name="Lapidus A."/>
            <person name="Monchy S."/>
            <person name="Medigue C."/>
            <person name="Taghavi S."/>
            <person name="McCorkle S."/>
            <person name="Dunn J."/>
            <person name="van der Lelie D."/>
            <person name="Mergeay M."/>
        </authorList>
    </citation>
    <scope>NUCLEOTIDE SEQUENCE [LARGE SCALE GENOMIC DNA]</scope>
    <source>
        <strain>ATCC 43123 / DSM 2839 / NBRC 102507 / CH34</strain>
    </source>
</reference>